<comment type="function">
    <text evidence="6 7">Specific functional receptor for IL17C. May be signaling through the NF-kappa-B and MAPK pathways. May require TRAF3IP2 /ACT1 for signaling. May be a crucial regulator in innate immunity to bacterial pathogens. Isoform 2 and isoform 4 may be either cytoplasmic inactive or dominant active forms. Isoform 3 and isoform 5 may act as soluble decoy receptors.</text>
</comment>
<comment type="subunit">
    <text>Forms heterodimers with IL17RA; the heterodimer binds IL17C.</text>
</comment>
<comment type="interaction">
    <interactant intactId="EBI-5591275">
        <id>Q8NFR9</id>
    </interactant>
    <interactant intactId="EBI-5591258">
        <id>Q96F46</id>
        <label>IL17RA</label>
    </interactant>
    <organismsDiffer>false</organismsDiffer>
    <experiments>2</experiments>
</comment>
<comment type="subcellular location">
    <molecule>Isoform 1</molecule>
    <subcellularLocation>
        <location evidence="1">Cell membrane</location>
        <topology evidence="1">Single-pass type I membrane protein</topology>
    </subcellularLocation>
</comment>
<comment type="subcellular location">
    <molecule>Isoform 2</molecule>
    <subcellularLocation>
        <location evidence="10">Cytoplasm</location>
    </subcellularLocation>
</comment>
<comment type="subcellular location">
    <molecule>Isoform 3</molecule>
    <subcellularLocation>
        <location evidence="10">Secreted</location>
    </subcellularLocation>
</comment>
<comment type="subcellular location">
    <molecule>Isoform 4</molecule>
    <subcellularLocation>
        <location evidence="10">Cytoplasm</location>
    </subcellularLocation>
</comment>
<comment type="subcellular location">
    <molecule>Isoform 5</molecule>
    <subcellularLocation>
        <location evidence="10">Secreted</location>
    </subcellularLocation>
</comment>
<comment type="alternative products">
    <event type="alternative splicing"/>
    <isoform>
        <id>Q8NFR9-1</id>
        <name>1</name>
        <sequence type="displayed"/>
    </isoform>
    <isoform>
        <id>Q8NFR9-2</id>
        <name>2</name>
        <sequence type="described" ref="VSP_029190"/>
    </isoform>
    <isoform>
        <id>Q8NFR9-3</id>
        <name>3</name>
        <sequence type="described" ref="VSP_029193 VSP_029196"/>
    </isoform>
    <isoform>
        <id>Q8NFR9-4</id>
        <name>4</name>
        <sequence type="described" ref="VSP_029190 VSP_029194 VSP_029195"/>
    </isoform>
    <isoform>
        <id>Q8NFR9-5</id>
        <name>5</name>
        <sequence type="described" ref="VSP_029191 VSP_029192"/>
    </isoform>
</comment>
<comment type="tissue specificity">
    <text evidence="5 6">Predominantly expressed in mucosal tissues with high levels in keratinocytes and colon epithelial cells. Very low expression in dermal fibroblasts. Expressed in various tumor cell lines.</text>
</comment>
<comment type="sequence caution" evidence="10">
    <molecule>Isoform 3</molecule>
    <conflict type="frameshift">
        <sequence resource="EMBL-CDS" id="BAB85028"/>
    </conflict>
</comment>
<sequence length="667" mass="74810">MGSSRLAALLLPLLLIVIDLSDSAGIGFRHLPHWNTRCPLASHTDDSFTGSSAYIPCRTWWALFSTKPWCVRVWHCSRCLCQHLLSGGSGLQRGLFHLLVQKSKKSSTFKFYRRHKMPAPAQRKLLPRRHLSEKSHHISIPSPDISHKGLRSKRTQPSDPETWESLPRLDSQRHGGPEFSFDLLPEARAIRVTISSGPEVSVRLCHQWALECEELSSPYDVQKIVSGGHTVELPYEFLLPCLCIEASYLQEDTVRRKKCPFQSWPEAYGSDFWKSVHFTDYSQHTQMVMALTLRCPLKLEAALCQRHDWHTLCKDLPNATARESDGWYVLEKVDLHPQLCFKFSFGNSSHVECPHQTGSLTSWNVSMDTQAQQLILHFSSRMHATFSAAWSLPGLGQDTLVPPVYTVSQARGSSPVSLDLIIPFLRPGCCVLVWRSDVQFAWKHLLCPDVSYRHLGLLILALLALLTLLGVVLALTCRRPQSGPGPARPVLLLHAADSEAQRRLVGALAELLRAALGGGRDVIVDLWEGRHVARVGPLPWLWAARTRVAREQGTVLLLWSGADLRPVSGPDPRAAPLLALLHAAPRPLLLLAYFSRLCAKGDIPPPLRALPRYRLLRDLPRLLRALDARPFAEATSWGRLGARQRRQSRLELCSRLEREAARLADLG</sequence>
<gene>
    <name type="primary">IL17RE</name>
    <name type="ORF">UNQ3056/PRO9877</name>
</gene>
<feature type="signal peptide" evidence="2">
    <location>
        <begin position="1"/>
        <end position="23"/>
    </location>
</feature>
<feature type="chain" id="PRO_0000309467" description="Interleukin-17 receptor E">
    <location>
        <begin position="24"/>
        <end position="667"/>
    </location>
</feature>
<feature type="topological domain" description="Extracellular" evidence="2">
    <location>
        <begin position="24"/>
        <end position="454"/>
    </location>
</feature>
<feature type="transmembrane region" description="Helical" evidence="2">
    <location>
        <begin position="455"/>
        <end position="475"/>
    </location>
</feature>
<feature type="topological domain" description="Cytoplasmic" evidence="2">
    <location>
        <begin position="476"/>
        <end position="667"/>
    </location>
</feature>
<feature type="domain" description="SEFIR" evidence="3">
    <location>
        <begin position="487"/>
        <end position="624"/>
    </location>
</feature>
<feature type="region of interest" description="Disordered" evidence="4">
    <location>
        <begin position="126"/>
        <end position="174"/>
    </location>
</feature>
<feature type="glycosylation site" description="N-linked (GlcNAc...) asparagine" evidence="2">
    <location>
        <position position="318"/>
    </location>
</feature>
<feature type="glycosylation site" description="N-linked (GlcNAc...) asparagine" evidence="2">
    <location>
        <position position="347"/>
    </location>
</feature>
<feature type="glycosylation site" description="N-linked (GlcNAc...) asparagine" evidence="2">
    <location>
        <position position="364"/>
    </location>
</feature>
<feature type="splice variant" id="VSP_029190" description="In isoform 2 and isoform 4." evidence="8">
    <location>
        <begin position="1"/>
        <end position="116"/>
    </location>
</feature>
<feature type="splice variant" id="VSP_029191" description="In isoform 5." evidence="9">
    <original>YGSD</original>
    <variation>CECC</variation>
    <location>
        <begin position="268"/>
        <end position="271"/>
    </location>
</feature>
<feature type="splice variant" id="VSP_029192" description="In isoform 5." evidence="9">
    <location>
        <begin position="272"/>
        <end position="667"/>
    </location>
</feature>
<feature type="splice variant" id="VSP_029193" description="In isoform 3." evidence="8">
    <original>VWRSDVQFAWKHLLCPDVSYRHLGLLILALLALLTLLGVVLALTCRRPQSGPGPARPVLLLHAADSEAQRRLVGALAELLRAALGGGRDVIVDLWEGRHVA</original>
    <variation>LHASLSSPGGEDAWLIGVGGSVPSGVAVRCPVCLEAPLVSGCLLQTPGALDPGTAGPPHPTGCCSGPHLPAPTVRPGPSAASAPPARGGLGGAAAPGGSAG</variation>
    <location>
        <begin position="433"/>
        <end position="533"/>
    </location>
</feature>
<feature type="splice variant" id="VSP_029194" description="In isoform 4." evidence="8">
    <original>VWRSDVQFAWKHLLCPDVSYRHLGLLILALLALLTLLGVVLALTCRRPQSGPGPARPVLLLHAADSEAQRRLVG</original>
    <variation>ASSWSRHKPTWEEFPSQWGLPSPPAPCFTQLPGRRRCLAHRGGGLCALRCGGQMSSLPGSTSCVRMSLTDTWGS</variation>
    <location>
        <begin position="433"/>
        <end position="506"/>
    </location>
</feature>
<feature type="splice variant" id="VSP_029195" description="In isoform 4." evidence="8">
    <location>
        <begin position="507"/>
        <end position="667"/>
    </location>
</feature>
<feature type="splice variant" id="VSP_029196" description="In isoform 3." evidence="8">
    <location>
        <begin position="534"/>
        <end position="667"/>
    </location>
</feature>
<feature type="sequence variant" id="VAR_036956" description="In dbSNP:rs7356031.">
    <original>Y</original>
    <variation>C</variation>
    <location>
        <position position="219"/>
    </location>
</feature>
<feature type="sequence variant" id="VAR_036957" description="In dbSNP:rs9870003.">
    <original>P</original>
    <variation>S</variation>
    <location>
        <position position="402"/>
    </location>
</feature>
<feature type="sequence variant" id="VAR_036958" description="In dbSNP:rs7647642.">
    <original>S</original>
    <variation>T</variation>
    <location>
        <position position="417"/>
    </location>
</feature>
<feature type="sequence conflict" description="In Ref. 3; BAC04864." evidence="10" ref="3">
    <original>S</original>
    <variation>P</variation>
    <location>
        <position position="270"/>
    </location>
</feature>
<feature type="sequence conflict" description="In Ref. 3; BAC04864." evidence="10" ref="3">
    <original>L</original>
    <variation>F</variation>
    <location>
        <position position="445"/>
    </location>
</feature>
<keyword id="KW-0025">Alternative splicing</keyword>
<keyword id="KW-1003">Cell membrane</keyword>
<keyword id="KW-0963">Cytoplasm</keyword>
<keyword id="KW-0325">Glycoprotein</keyword>
<keyword id="KW-0395">Inflammatory response</keyword>
<keyword id="KW-0472">Membrane</keyword>
<keyword id="KW-0675">Receptor</keyword>
<keyword id="KW-1185">Reference proteome</keyword>
<keyword id="KW-0964">Secreted</keyword>
<keyword id="KW-0732">Signal</keyword>
<keyword id="KW-0812">Transmembrane</keyword>
<keyword id="KW-1133">Transmembrane helix</keyword>
<name>I17RE_HUMAN</name>
<evidence type="ECO:0000250" key="1"/>
<evidence type="ECO:0000255" key="2"/>
<evidence type="ECO:0000255" key="3">
    <source>
        <dbReference type="PROSITE-ProRule" id="PRU00867"/>
    </source>
</evidence>
<evidence type="ECO:0000256" key="4">
    <source>
        <dbReference type="SAM" id="MobiDB-lite"/>
    </source>
</evidence>
<evidence type="ECO:0000269" key="5">
    <source>
    </source>
</evidence>
<evidence type="ECO:0000269" key="6">
    <source>
    </source>
</evidence>
<evidence type="ECO:0000269" key="7">
    <source>
    </source>
</evidence>
<evidence type="ECO:0000303" key="8">
    <source>
    </source>
</evidence>
<evidence type="ECO:0000303" key="9">
    <source>
    </source>
</evidence>
<evidence type="ECO:0000305" key="10"/>
<accession>Q8NFR9</accession>
<accession>B2RB34</accession>
<accession>B2RNR1</accession>
<accession>B9EH65</accession>
<accession>Q6P532</accession>
<accession>Q8N8H7</accession>
<accession>Q8N8H8</accession>
<accession>Q8TEC2</accession>
<proteinExistence type="evidence at protein level"/>
<reference key="1">
    <citation type="submission" date="2001-12" db="EMBL/GenBank/DDBJ databases">
        <title>Identification of novel IL-17 related receptors.</title>
        <authorList>
            <person name="Gilbert J.M."/>
            <person name="Gorman D.M."/>
        </authorList>
    </citation>
    <scope>NUCLEOTIDE SEQUENCE [MRNA] (ISOFORM 1)</scope>
</reference>
<reference key="2">
    <citation type="journal article" date="2003" name="Genome Res.">
        <title>The secreted protein discovery initiative (SPDI), a large-scale effort to identify novel human secreted and transmembrane proteins: a bioinformatics assessment.</title>
        <authorList>
            <person name="Clark H.F."/>
            <person name="Gurney A.L."/>
            <person name="Abaya E."/>
            <person name="Baker K."/>
            <person name="Baldwin D.T."/>
            <person name="Brush J."/>
            <person name="Chen J."/>
            <person name="Chow B."/>
            <person name="Chui C."/>
            <person name="Crowley C."/>
            <person name="Currell B."/>
            <person name="Deuel B."/>
            <person name="Dowd P."/>
            <person name="Eaton D."/>
            <person name="Foster J.S."/>
            <person name="Grimaldi C."/>
            <person name="Gu Q."/>
            <person name="Hass P.E."/>
            <person name="Heldens S."/>
            <person name="Huang A."/>
            <person name="Kim H.S."/>
            <person name="Klimowski L."/>
            <person name="Jin Y."/>
            <person name="Johnson S."/>
            <person name="Lee J."/>
            <person name="Lewis L."/>
            <person name="Liao D."/>
            <person name="Mark M.R."/>
            <person name="Robbie E."/>
            <person name="Sanchez C."/>
            <person name="Schoenfeld J."/>
            <person name="Seshagiri S."/>
            <person name="Simmons L."/>
            <person name="Singh J."/>
            <person name="Smith V."/>
            <person name="Stinson J."/>
            <person name="Vagts A."/>
            <person name="Vandlen R.L."/>
            <person name="Watanabe C."/>
            <person name="Wieand D."/>
            <person name="Woods K."/>
            <person name="Xie M.-H."/>
            <person name="Yansura D.G."/>
            <person name="Yi S."/>
            <person name="Yu G."/>
            <person name="Yuan J."/>
            <person name="Zhang M."/>
            <person name="Zhang Z."/>
            <person name="Goddard A.D."/>
            <person name="Wood W.I."/>
            <person name="Godowski P.J."/>
            <person name="Gray A.M."/>
        </authorList>
    </citation>
    <scope>NUCLEOTIDE SEQUENCE [LARGE SCALE MRNA] (ISOFORM 1)</scope>
</reference>
<reference key="3">
    <citation type="journal article" date="2004" name="Nat. Genet.">
        <title>Complete sequencing and characterization of 21,243 full-length human cDNAs.</title>
        <authorList>
            <person name="Ota T."/>
            <person name="Suzuki Y."/>
            <person name="Nishikawa T."/>
            <person name="Otsuki T."/>
            <person name="Sugiyama T."/>
            <person name="Irie R."/>
            <person name="Wakamatsu A."/>
            <person name="Hayashi K."/>
            <person name="Sato H."/>
            <person name="Nagai K."/>
            <person name="Kimura K."/>
            <person name="Makita H."/>
            <person name="Sekine M."/>
            <person name="Obayashi M."/>
            <person name="Nishi T."/>
            <person name="Shibahara T."/>
            <person name="Tanaka T."/>
            <person name="Ishii S."/>
            <person name="Yamamoto J."/>
            <person name="Saito K."/>
            <person name="Kawai Y."/>
            <person name="Isono Y."/>
            <person name="Nakamura Y."/>
            <person name="Nagahari K."/>
            <person name="Murakami K."/>
            <person name="Yasuda T."/>
            <person name="Iwayanagi T."/>
            <person name="Wagatsuma M."/>
            <person name="Shiratori A."/>
            <person name="Sudo H."/>
            <person name="Hosoiri T."/>
            <person name="Kaku Y."/>
            <person name="Kodaira H."/>
            <person name="Kondo H."/>
            <person name="Sugawara M."/>
            <person name="Takahashi M."/>
            <person name="Kanda K."/>
            <person name="Yokoi T."/>
            <person name="Furuya T."/>
            <person name="Kikkawa E."/>
            <person name="Omura Y."/>
            <person name="Abe K."/>
            <person name="Kamihara K."/>
            <person name="Katsuta N."/>
            <person name="Sato K."/>
            <person name="Tanikawa M."/>
            <person name="Yamazaki M."/>
            <person name="Ninomiya K."/>
            <person name="Ishibashi T."/>
            <person name="Yamashita H."/>
            <person name="Murakawa K."/>
            <person name="Fujimori K."/>
            <person name="Tanai H."/>
            <person name="Kimata M."/>
            <person name="Watanabe M."/>
            <person name="Hiraoka S."/>
            <person name="Chiba Y."/>
            <person name="Ishida S."/>
            <person name="Ono Y."/>
            <person name="Takiguchi S."/>
            <person name="Watanabe S."/>
            <person name="Yosida M."/>
            <person name="Hotuta T."/>
            <person name="Kusano J."/>
            <person name="Kanehori K."/>
            <person name="Takahashi-Fujii A."/>
            <person name="Hara H."/>
            <person name="Tanase T.-O."/>
            <person name="Nomura Y."/>
            <person name="Togiya S."/>
            <person name="Komai F."/>
            <person name="Hara R."/>
            <person name="Takeuchi K."/>
            <person name="Arita M."/>
            <person name="Imose N."/>
            <person name="Musashino K."/>
            <person name="Yuuki H."/>
            <person name="Oshima A."/>
            <person name="Sasaki N."/>
            <person name="Aotsuka S."/>
            <person name="Yoshikawa Y."/>
            <person name="Matsunawa H."/>
            <person name="Ichihara T."/>
            <person name="Shiohata N."/>
            <person name="Sano S."/>
            <person name="Moriya S."/>
            <person name="Momiyama H."/>
            <person name="Satoh N."/>
            <person name="Takami S."/>
            <person name="Terashima Y."/>
            <person name="Suzuki O."/>
            <person name="Nakagawa S."/>
            <person name="Senoh A."/>
            <person name="Mizoguchi H."/>
            <person name="Goto Y."/>
            <person name="Shimizu F."/>
            <person name="Wakebe H."/>
            <person name="Hishigaki H."/>
            <person name="Watanabe T."/>
            <person name="Sugiyama A."/>
            <person name="Takemoto M."/>
            <person name="Kawakami B."/>
            <person name="Yamazaki M."/>
            <person name="Watanabe K."/>
            <person name="Kumagai A."/>
            <person name="Itakura S."/>
            <person name="Fukuzumi Y."/>
            <person name="Fujimori Y."/>
            <person name="Komiyama M."/>
            <person name="Tashiro H."/>
            <person name="Tanigami A."/>
            <person name="Fujiwara T."/>
            <person name="Ono T."/>
            <person name="Yamada K."/>
            <person name="Fujii Y."/>
            <person name="Ozaki K."/>
            <person name="Hirao M."/>
            <person name="Ohmori Y."/>
            <person name="Kawabata A."/>
            <person name="Hikiji T."/>
            <person name="Kobatake N."/>
            <person name="Inagaki H."/>
            <person name="Ikema Y."/>
            <person name="Okamoto S."/>
            <person name="Okitani R."/>
            <person name="Kawakami T."/>
            <person name="Noguchi S."/>
            <person name="Itoh T."/>
            <person name="Shigeta K."/>
            <person name="Senba T."/>
            <person name="Matsumura K."/>
            <person name="Nakajima Y."/>
            <person name="Mizuno T."/>
            <person name="Morinaga M."/>
            <person name="Sasaki M."/>
            <person name="Togashi T."/>
            <person name="Oyama M."/>
            <person name="Hata H."/>
            <person name="Watanabe M."/>
            <person name="Komatsu T."/>
            <person name="Mizushima-Sugano J."/>
            <person name="Satoh T."/>
            <person name="Shirai Y."/>
            <person name="Takahashi Y."/>
            <person name="Nakagawa K."/>
            <person name="Okumura K."/>
            <person name="Nagase T."/>
            <person name="Nomura N."/>
            <person name="Kikuchi H."/>
            <person name="Masuho Y."/>
            <person name="Yamashita R."/>
            <person name="Nakai K."/>
            <person name="Yada T."/>
            <person name="Nakamura Y."/>
            <person name="Ohara O."/>
            <person name="Isogai T."/>
            <person name="Sugano S."/>
        </authorList>
    </citation>
    <scope>NUCLEOTIDE SEQUENCE [LARGE SCALE MRNA] (ISOFORMS 2; 3 AND 4)</scope>
    <source>
        <tissue>Colon mucosa</tissue>
        <tissue>Prostate</tissue>
        <tissue>Small intestine</tissue>
    </source>
</reference>
<reference key="4">
    <citation type="submission" date="2005-07" db="EMBL/GenBank/DDBJ databases">
        <authorList>
            <person name="Mural R.J."/>
            <person name="Istrail S."/>
            <person name="Sutton G.G."/>
            <person name="Florea L."/>
            <person name="Halpern A.L."/>
            <person name="Mobarry C.M."/>
            <person name="Lippert R."/>
            <person name="Walenz B."/>
            <person name="Shatkay H."/>
            <person name="Dew I."/>
            <person name="Miller J.R."/>
            <person name="Flanigan M.J."/>
            <person name="Edwards N.J."/>
            <person name="Bolanos R."/>
            <person name="Fasulo D."/>
            <person name="Halldorsson B.V."/>
            <person name="Hannenhalli S."/>
            <person name="Turner R."/>
            <person name="Yooseph S."/>
            <person name="Lu F."/>
            <person name="Nusskern D.R."/>
            <person name="Shue B.C."/>
            <person name="Zheng X.H."/>
            <person name="Zhong F."/>
            <person name="Delcher A.L."/>
            <person name="Huson D.H."/>
            <person name="Kravitz S.A."/>
            <person name="Mouchard L."/>
            <person name="Reinert K."/>
            <person name="Remington K.A."/>
            <person name="Clark A.G."/>
            <person name="Waterman M.S."/>
            <person name="Eichler E.E."/>
            <person name="Adams M.D."/>
            <person name="Hunkapiller M.W."/>
            <person name="Myers E.W."/>
            <person name="Venter J.C."/>
        </authorList>
    </citation>
    <scope>NUCLEOTIDE SEQUENCE [LARGE SCALE GENOMIC DNA]</scope>
</reference>
<reference key="5">
    <citation type="journal article" date="2004" name="Genome Res.">
        <title>The status, quality, and expansion of the NIH full-length cDNA project: the Mammalian Gene Collection (MGC).</title>
        <authorList>
            <consortium name="The MGC Project Team"/>
        </authorList>
    </citation>
    <scope>NUCLEOTIDE SEQUENCE [LARGE SCALE MRNA] (ISOFORMS 1 AND 5)</scope>
    <source>
        <tissue>Lung</tissue>
        <tissue>Skin</tissue>
        <tissue>Testis</tissue>
    </source>
</reference>
<reference key="6">
    <citation type="journal article" date="2006" name="Cell. Signal.">
        <title>Identification and functional characterization of a novel interleukin 17 receptor: a possible mitogenic activation through ras/mitogen-activated protein kinase signaling pathway.</title>
        <authorList>
            <person name="Li T.-S."/>
            <person name="Li X.-N."/>
            <person name="Chang Z.-J."/>
            <person name="Fu X.-Y."/>
            <person name="Liu L."/>
        </authorList>
    </citation>
    <scope>TISSUE SPECIFICITY</scope>
</reference>
<reference key="7">
    <citation type="journal article" date="2011" name="Nat. Immunol.">
        <title>IL-17RE is the functional receptor for IL-17C and mediates mucosal immunity to infection with intestinal pathogens.</title>
        <authorList>
            <person name="Song X."/>
            <person name="Zhu S."/>
            <person name="Shi P."/>
            <person name="Liu Y."/>
            <person name="Shi Y."/>
            <person name="Levin S.D."/>
            <person name="Qian Y."/>
        </authorList>
    </citation>
    <scope>FUNCTION</scope>
    <scope>IDENTIFICATION AS IL17C RECEPTOR</scope>
</reference>
<reference key="8">
    <citation type="journal article" date="2011" name="Nat. Immunol.">
        <title>IL-17C regulates the innate immune function of epithelial cells in an autocrine manner.</title>
        <authorList>
            <person name="Ramirez-Carrozzi V."/>
            <person name="Sambandam A."/>
            <person name="Luis E."/>
            <person name="Lin Z."/>
            <person name="Jeet S."/>
            <person name="Lesch J."/>
            <person name="Hackney J."/>
            <person name="Kim J."/>
            <person name="Zhou M."/>
            <person name="Lai J."/>
            <person name="Modrusan Z."/>
            <person name="Sai T."/>
            <person name="Lee W."/>
            <person name="Xu M."/>
            <person name="Caplazi P."/>
            <person name="Diehl L."/>
            <person name="de Voss J."/>
            <person name="Balazs M."/>
            <person name="Gonzalez L. Jr."/>
            <person name="Singh H."/>
            <person name="Ouyang W."/>
            <person name="Pappu R."/>
        </authorList>
    </citation>
    <scope>FUNCTION</scope>
    <scope>IDENTIFICATION AS IL17C RECEPTOR</scope>
    <scope>INTERACTION WITH IL17RA</scope>
    <scope>TISSUE SPECIFICITY</scope>
</reference>
<dbReference type="EMBL" id="AF458069">
    <property type="protein sequence ID" value="AAM77573.1"/>
    <property type="molecule type" value="mRNA"/>
</dbReference>
<dbReference type="EMBL" id="AY358451">
    <property type="protein sequence ID" value="AAQ88816.1"/>
    <property type="molecule type" value="mRNA"/>
</dbReference>
<dbReference type="EMBL" id="AK074238">
    <property type="protein sequence ID" value="BAB85028.1"/>
    <property type="status" value="ALT_FRAME"/>
    <property type="molecule type" value="mRNA"/>
</dbReference>
<dbReference type="EMBL" id="AK096793">
    <property type="protein sequence ID" value="BAC04863.1"/>
    <property type="molecule type" value="mRNA"/>
</dbReference>
<dbReference type="EMBL" id="AK096801">
    <property type="protein sequence ID" value="BAC04864.1"/>
    <property type="molecule type" value="mRNA"/>
</dbReference>
<dbReference type="EMBL" id="AK314476">
    <property type="protein sequence ID" value="BAG37081.1"/>
    <property type="molecule type" value="mRNA"/>
</dbReference>
<dbReference type="EMBL" id="CH471055">
    <property type="protein sequence ID" value="EAW64019.1"/>
    <property type="molecule type" value="Genomic_DNA"/>
</dbReference>
<dbReference type="EMBL" id="CH471055">
    <property type="protein sequence ID" value="EAW64020.1"/>
    <property type="molecule type" value="Genomic_DNA"/>
</dbReference>
<dbReference type="EMBL" id="CH471055">
    <property type="protein sequence ID" value="EAW64016.1"/>
    <property type="molecule type" value="Genomic_DNA"/>
</dbReference>
<dbReference type="EMBL" id="BC063110">
    <property type="protein sequence ID" value="AAH63110.1"/>
    <property type="molecule type" value="mRNA"/>
</dbReference>
<dbReference type="EMBL" id="BC137077">
    <property type="protein sequence ID" value="AAI37078.1"/>
    <property type="molecule type" value="mRNA"/>
</dbReference>
<dbReference type="EMBL" id="BC137078">
    <property type="protein sequence ID" value="AAI37079.1"/>
    <property type="molecule type" value="mRNA"/>
</dbReference>
<dbReference type="CCDS" id="CCDS2589.1">
    <molecule id="Q8NFR9-1"/>
</dbReference>
<dbReference type="CCDS" id="CCDS54552.1">
    <molecule id="Q8NFR9-3"/>
</dbReference>
<dbReference type="RefSeq" id="NP_001180309.1">
    <molecule id="Q8NFR9-3"/>
    <property type="nucleotide sequence ID" value="NM_001193380.2"/>
</dbReference>
<dbReference type="RefSeq" id="NP_705613.1">
    <molecule id="Q8NFR9-1"/>
    <property type="nucleotide sequence ID" value="NM_153480.2"/>
</dbReference>
<dbReference type="RefSeq" id="NP_705614.1">
    <molecule id="Q8NFR9-2"/>
    <property type="nucleotide sequence ID" value="NM_153481.2"/>
</dbReference>
<dbReference type="RefSeq" id="NP_705616.2">
    <property type="nucleotide sequence ID" value="NM_153483.2"/>
</dbReference>
<dbReference type="RefSeq" id="XP_006713039.1">
    <molecule id="Q8NFR9-2"/>
    <property type="nucleotide sequence ID" value="XM_006712976.2"/>
</dbReference>
<dbReference type="RefSeq" id="XP_047303414.1">
    <molecule id="Q8NFR9-1"/>
    <property type="nucleotide sequence ID" value="XM_047447458.1"/>
</dbReference>
<dbReference type="RefSeq" id="XP_047303416.1">
    <molecule id="Q8NFR9-3"/>
    <property type="nucleotide sequence ID" value="XM_047447460.1"/>
</dbReference>
<dbReference type="RefSeq" id="XP_054201241.1">
    <molecule id="Q8NFR9-1"/>
    <property type="nucleotide sequence ID" value="XM_054345266.1"/>
</dbReference>
<dbReference type="RefSeq" id="XP_054201246.1">
    <molecule id="Q8NFR9-2"/>
    <property type="nucleotide sequence ID" value="XM_054345271.1"/>
</dbReference>
<dbReference type="SMR" id="Q8NFR9"/>
<dbReference type="BioGRID" id="126304">
    <property type="interactions" value="27"/>
</dbReference>
<dbReference type="ComplexPortal" id="CPX-9207">
    <property type="entry name" value="Interleukin-17C receptor-ligand complex"/>
</dbReference>
<dbReference type="CORUM" id="Q8NFR9"/>
<dbReference type="FunCoup" id="Q8NFR9">
    <property type="interactions" value="900"/>
</dbReference>
<dbReference type="IntAct" id="Q8NFR9">
    <property type="interactions" value="10"/>
</dbReference>
<dbReference type="STRING" id="9606.ENSP00000373325"/>
<dbReference type="BindingDB" id="Q8NFR9"/>
<dbReference type="ChEMBL" id="CHEMBL5483004"/>
<dbReference type="GlyCosmos" id="Q8NFR9">
    <property type="glycosylation" value="3 sites, No reported glycans"/>
</dbReference>
<dbReference type="GlyGen" id="Q8NFR9">
    <property type="glycosylation" value="3 sites"/>
</dbReference>
<dbReference type="iPTMnet" id="Q8NFR9"/>
<dbReference type="PhosphoSitePlus" id="Q8NFR9"/>
<dbReference type="BioMuta" id="IL17RE"/>
<dbReference type="DMDM" id="74730297"/>
<dbReference type="jPOST" id="Q8NFR9"/>
<dbReference type="MassIVE" id="Q8NFR9"/>
<dbReference type="PaxDb" id="9606-ENSP00000373325"/>
<dbReference type="PeptideAtlas" id="Q8NFR9"/>
<dbReference type="ProteomicsDB" id="73342">
    <molecule id="Q8NFR9-1"/>
</dbReference>
<dbReference type="ProteomicsDB" id="73343">
    <molecule id="Q8NFR9-2"/>
</dbReference>
<dbReference type="Antibodypedia" id="2563">
    <property type="antibodies" value="318 antibodies from 31 providers"/>
</dbReference>
<dbReference type="DNASU" id="132014"/>
<dbReference type="Ensembl" id="ENST00000383814.8">
    <molecule id="Q8NFR9-1"/>
    <property type="protein sequence ID" value="ENSP00000373325.3"/>
    <property type="gene ID" value="ENSG00000163701.19"/>
</dbReference>
<dbReference type="Ensembl" id="ENST00000454190.6">
    <molecule id="Q8NFR9-3"/>
    <property type="protein sequence ID" value="ENSP00000388086.2"/>
    <property type="gene ID" value="ENSG00000163701.19"/>
</dbReference>
<dbReference type="GeneID" id="132014"/>
<dbReference type="KEGG" id="hsa:132014"/>
<dbReference type="MANE-Select" id="ENST00000383814.8">
    <property type="protein sequence ID" value="ENSP00000373325.3"/>
    <property type="RefSeq nucleotide sequence ID" value="NM_153480.2"/>
    <property type="RefSeq protein sequence ID" value="NP_705613.1"/>
</dbReference>
<dbReference type="UCSC" id="uc003btw.4">
    <molecule id="Q8NFR9-1"/>
    <property type="organism name" value="human"/>
</dbReference>
<dbReference type="AGR" id="HGNC:18439"/>
<dbReference type="CTD" id="132014"/>
<dbReference type="DisGeNET" id="132014"/>
<dbReference type="GeneCards" id="IL17RE"/>
<dbReference type="HGNC" id="HGNC:18439">
    <property type="gene designation" value="IL17RE"/>
</dbReference>
<dbReference type="HPA" id="ENSG00000163701">
    <property type="expression patterns" value="Tissue enhanced (intestine, skin)"/>
</dbReference>
<dbReference type="MIM" id="614995">
    <property type="type" value="gene"/>
</dbReference>
<dbReference type="neXtProt" id="NX_Q8NFR9"/>
<dbReference type="OpenTargets" id="ENSG00000163701"/>
<dbReference type="PharmGKB" id="PA134896136"/>
<dbReference type="VEuPathDB" id="HostDB:ENSG00000163701"/>
<dbReference type="eggNOG" id="ENOG502QU0I">
    <property type="taxonomic scope" value="Eukaryota"/>
</dbReference>
<dbReference type="GeneTree" id="ENSGT00940000161421"/>
<dbReference type="HOGENOM" id="CLU_026094_0_0_1"/>
<dbReference type="InParanoid" id="Q8NFR9"/>
<dbReference type="OMA" id="CPDVSNR"/>
<dbReference type="OrthoDB" id="9894203at2759"/>
<dbReference type="PAN-GO" id="Q8NFR9">
    <property type="GO annotations" value="1 GO annotation based on evolutionary models"/>
</dbReference>
<dbReference type="PhylomeDB" id="Q8NFR9"/>
<dbReference type="TreeFam" id="TF335690"/>
<dbReference type="PathwayCommons" id="Q8NFR9"/>
<dbReference type="Reactome" id="R-HSA-448424">
    <property type="pathway name" value="Interleukin-17 signaling"/>
</dbReference>
<dbReference type="SignaLink" id="Q8NFR9"/>
<dbReference type="BioGRID-ORCS" id="132014">
    <property type="hits" value="12 hits in 1145 CRISPR screens"/>
</dbReference>
<dbReference type="GenomeRNAi" id="132014"/>
<dbReference type="Pharos" id="Q8NFR9">
    <property type="development level" value="Tbio"/>
</dbReference>
<dbReference type="PRO" id="PR:Q8NFR9"/>
<dbReference type="Proteomes" id="UP000005640">
    <property type="component" value="Chromosome 3"/>
</dbReference>
<dbReference type="RNAct" id="Q8NFR9">
    <property type="molecule type" value="protein"/>
</dbReference>
<dbReference type="Bgee" id="ENSG00000163701">
    <property type="expression patterns" value="Expressed in skin of leg and 93 other cell types or tissues"/>
</dbReference>
<dbReference type="ExpressionAtlas" id="Q8NFR9">
    <property type="expression patterns" value="baseline and differential"/>
</dbReference>
<dbReference type="GO" id="GO:0005737">
    <property type="term" value="C:cytoplasm"/>
    <property type="evidence" value="ECO:0007669"/>
    <property type="project" value="UniProtKB-SubCell"/>
</dbReference>
<dbReference type="GO" id="GO:0005576">
    <property type="term" value="C:extracellular region"/>
    <property type="evidence" value="ECO:0007669"/>
    <property type="project" value="UniProtKB-SubCell"/>
</dbReference>
<dbReference type="GO" id="GO:0005886">
    <property type="term" value="C:plasma membrane"/>
    <property type="evidence" value="ECO:0000304"/>
    <property type="project" value="Reactome"/>
</dbReference>
<dbReference type="GO" id="GO:0030368">
    <property type="term" value="F:interleukin-17 receptor activity"/>
    <property type="evidence" value="ECO:0000318"/>
    <property type="project" value="GO_Central"/>
</dbReference>
<dbReference type="GO" id="GO:0006954">
    <property type="term" value="P:inflammatory response"/>
    <property type="evidence" value="ECO:0007669"/>
    <property type="project" value="UniProtKB-KW"/>
</dbReference>
<dbReference type="FunFam" id="3.40.50.11530:FF:000006">
    <property type="entry name" value="interleukin-17 receptor E isoform X2"/>
    <property type="match status" value="1"/>
</dbReference>
<dbReference type="Gene3D" id="3.40.50.11530">
    <property type="match status" value="1"/>
</dbReference>
<dbReference type="InterPro" id="IPR039465">
    <property type="entry name" value="IL-17_rcpt-like"/>
</dbReference>
<dbReference type="InterPro" id="IPR027841">
    <property type="entry name" value="IL-17_rcpt_C/E_N"/>
</dbReference>
<dbReference type="InterPro" id="IPR013568">
    <property type="entry name" value="SEFIR_dom"/>
</dbReference>
<dbReference type="PANTHER" id="PTHR15583">
    <property type="entry name" value="INTERLEUKIN-17 RECEPTOR"/>
    <property type="match status" value="1"/>
</dbReference>
<dbReference type="PANTHER" id="PTHR15583:SF5">
    <property type="entry name" value="INTERLEUKIN-17 RECEPTOR E"/>
    <property type="match status" value="1"/>
</dbReference>
<dbReference type="Pfam" id="PF15037">
    <property type="entry name" value="IL17_R_N"/>
    <property type="match status" value="2"/>
</dbReference>
<dbReference type="Pfam" id="PF08357">
    <property type="entry name" value="SEFIR"/>
    <property type="match status" value="1"/>
</dbReference>
<dbReference type="PROSITE" id="PS51534">
    <property type="entry name" value="SEFIR"/>
    <property type="match status" value="1"/>
</dbReference>
<organism>
    <name type="scientific">Homo sapiens</name>
    <name type="common">Human</name>
    <dbReference type="NCBI Taxonomy" id="9606"/>
    <lineage>
        <taxon>Eukaryota</taxon>
        <taxon>Metazoa</taxon>
        <taxon>Chordata</taxon>
        <taxon>Craniata</taxon>
        <taxon>Vertebrata</taxon>
        <taxon>Euteleostomi</taxon>
        <taxon>Mammalia</taxon>
        <taxon>Eutheria</taxon>
        <taxon>Euarchontoglires</taxon>
        <taxon>Primates</taxon>
        <taxon>Haplorrhini</taxon>
        <taxon>Catarrhini</taxon>
        <taxon>Hominidae</taxon>
        <taxon>Homo</taxon>
    </lineage>
</organism>
<protein>
    <recommendedName>
        <fullName>Interleukin-17 receptor E</fullName>
        <shortName>IL-17 receptor E</shortName>
        <shortName>IL-17RE</shortName>
    </recommendedName>
</protein>